<keyword id="KW-0963">Cytoplasm</keyword>
<keyword id="KW-1017">Isopeptide bond</keyword>
<keyword id="KW-0479">Metal-binding</keyword>
<keyword id="KW-0539">Nucleus</keyword>
<keyword id="KW-0687">Ribonucleoprotein</keyword>
<keyword id="KW-0689">Ribosomal protein</keyword>
<keyword id="KW-0832">Ubl conjugation</keyword>
<keyword id="KW-0862">Zinc</keyword>
<keyword id="KW-0863">Zinc-finger</keyword>
<protein>
    <recommendedName>
        <fullName evidence="3">Ubiquitin-ribosomal protein eS31z fusion protein</fullName>
    </recommendedName>
    <component>
        <recommendedName>
            <fullName>Ubiquitin</fullName>
        </recommendedName>
    </component>
    <component>
        <recommendedName>
            <fullName evidence="3">Small ribosomal subunit protein eS31z</fullName>
        </recommendedName>
        <alternativeName>
            <fullName>40S ribosomal protein S27a</fullName>
        </alternativeName>
    </component>
</protein>
<name>RS271_HORVU</name>
<sequence>MQIFVKTLTGKTITLEVESSDTIDNVKAKIQDKEGIPPDQQRLIFAGKQLEDGRTLADYNIQKESTLHLVLRLRGGAKKRKKKTYTKPKKQKHKHKKVKLAVLQFYKVDDATGKVTRLRKECPNADCGAGTFMANHFDRHYCGKCGLTYVYNQKA</sequence>
<feature type="chain" id="PRO_0000114841" description="Ubiquitin">
    <location>
        <begin position="1"/>
        <end position="76"/>
    </location>
</feature>
<feature type="chain" id="PRO_0000137679" description="Small ribosomal subunit protein eS31z">
    <location>
        <begin position="77"/>
        <end position="155"/>
    </location>
</feature>
<feature type="domain" description="Ubiquitin-like" evidence="2">
    <location>
        <begin position="1"/>
        <end position="76"/>
    </location>
</feature>
<feature type="zinc finger region" description="C4-type">
    <location>
        <begin position="122"/>
        <end position="145"/>
    </location>
</feature>
<feature type="cross-link" description="Glycyl lysine isopeptide (Lys-Gly) (interchain with G-Cter in ubiquitin)" evidence="1">
    <location>
        <position position="48"/>
    </location>
</feature>
<feature type="cross-link" description="Glycyl lysine isopeptide (Gly-Lys) (interchain with K-? in acceptor proteins)" evidence="2">
    <location>
        <position position="76"/>
    </location>
</feature>
<accession>P0CG86</accession>
<accession>O82079</accession>
<accession>P03993</accession>
<accession>P22277</accession>
<accession>P69314</accession>
<dbReference type="EMBL" id="M60175">
    <property type="protein sequence ID" value="AAA62698.1"/>
    <property type="molecule type" value="Genomic_DNA"/>
</dbReference>
<dbReference type="PIR" id="JH0226">
    <property type="entry name" value="JH0226"/>
</dbReference>
<dbReference type="SMR" id="P0CG86"/>
<dbReference type="ExpressionAtlas" id="P0CG86">
    <property type="expression patterns" value="baseline and differential"/>
</dbReference>
<dbReference type="GO" id="GO:0005737">
    <property type="term" value="C:cytoplasm"/>
    <property type="evidence" value="ECO:0007669"/>
    <property type="project" value="UniProtKB-SubCell"/>
</dbReference>
<dbReference type="GO" id="GO:0005634">
    <property type="term" value="C:nucleus"/>
    <property type="evidence" value="ECO:0007669"/>
    <property type="project" value="UniProtKB-SubCell"/>
</dbReference>
<dbReference type="GO" id="GO:1990904">
    <property type="term" value="C:ribonucleoprotein complex"/>
    <property type="evidence" value="ECO:0007669"/>
    <property type="project" value="UniProtKB-KW"/>
</dbReference>
<dbReference type="GO" id="GO:0005840">
    <property type="term" value="C:ribosome"/>
    <property type="evidence" value="ECO:0007669"/>
    <property type="project" value="UniProtKB-KW"/>
</dbReference>
<dbReference type="GO" id="GO:0003729">
    <property type="term" value="F:mRNA binding"/>
    <property type="evidence" value="ECO:0007669"/>
    <property type="project" value="UniProtKB-ARBA"/>
</dbReference>
<dbReference type="GO" id="GO:0003735">
    <property type="term" value="F:structural constituent of ribosome"/>
    <property type="evidence" value="ECO:0007669"/>
    <property type="project" value="InterPro"/>
</dbReference>
<dbReference type="GO" id="GO:0008270">
    <property type="term" value="F:zinc ion binding"/>
    <property type="evidence" value="ECO:0007669"/>
    <property type="project" value="UniProtKB-KW"/>
</dbReference>
<dbReference type="GO" id="GO:0006412">
    <property type="term" value="P:translation"/>
    <property type="evidence" value="ECO:0007669"/>
    <property type="project" value="InterPro"/>
</dbReference>
<dbReference type="CDD" id="cd01803">
    <property type="entry name" value="Ubl_ubiquitin"/>
    <property type="match status" value="1"/>
</dbReference>
<dbReference type="FunFam" id="3.10.20.90:FF:000008">
    <property type="entry name" value="Ubiquitin-40S ribosomal protein S27a"/>
    <property type="match status" value="1"/>
</dbReference>
<dbReference type="Gene3D" id="6.20.50.150">
    <property type="match status" value="1"/>
</dbReference>
<dbReference type="Gene3D" id="3.10.20.90">
    <property type="entry name" value="Phosphatidylinositol 3-kinase Catalytic Subunit, Chain A, domain 1"/>
    <property type="match status" value="1"/>
</dbReference>
<dbReference type="InterPro" id="IPR002906">
    <property type="entry name" value="Ribosomal_eS31"/>
</dbReference>
<dbReference type="InterPro" id="IPR038582">
    <property type="entry name" value="Ribosomal_eS31_euk-type_sf"/>
</dbReference>
<dbReference type="InterPro" id="IPR011332">
    <property type="entry name" value="Ribosomal_zn-bd"/>
</dbReference>
<dbReference type="InterPro" id="IPR000626">
    <property type="entry name" value="Ubiquitin-like_dom"/>
</dbReference>
<dbReference type="InterPro" id="IPR029071">
    <property type="entry name" value="Ubiquitin-like_domsf"/>
</dbReference>
<dbReference type="InterPro" id="IPR019954">
    <property type="entry name" value="Ubiquitin_CS"/>
</dbReference>
<dbReference type="InterPro" id="IPR019956">
    <property type="entry name" value="Ubiquitin_dom"/>
</dbReference>
<dbReference type="InterPro" id="IPR050158">
    <property type="entry name" value="Ubiquitin_ubiquitin-like"/>
</dbReference>
<dbReference type="PANTHER" id="PTHR10666">
    <property type="entry name" value="UBIQUITIN"/>
    <property type="match status" value="1"/>
</dbReference>
<dbReference type="Pfam" id="PF01599">
    <property type="entry name" value="Ribosomal_S27"/>
    <property type="match status" value="1"/>
</dbReference>
<dbReference type="Pfam" id="PF00240">
    <property type="entry name" value="ubiquitin"/>
    <property type="match status" value="1"/>
</dbReference>
<dbReference type="PRINTS" id="PR00348">
    <property type="entry name" value="UBIQUITIN"/>
</dbReference>
<dbReference type="SMART" id="SM01402">
    <property type="entry name" value="Ribosomal_S27"/>
    <property type="match status" value="1"/>
</dbReference>
<dbReference type="SMART" id="SM00213">
    <property type="entry name" value="UBQ"/>
    <property type="match status" value="1"/>
</dbReference>
<dbReference type="SUPFAM" id="SSF54236">
    <property type="entry name" value="Ubiquitin-like"/>
    <property type="match status" value="1"/>
</dbReference>
<dbReference type="SUPFAM" id="SSF57829">
    <property type="entry name" value="Zn-binding ribosomal proteins"/>
    <property type="match status" value="1"/>
</dbReference>
<dbReference type="PROSITE" id="PS00299">
    <property type="entry name" value="UBIQUITIN_1"/>
    <property type="match status" value="1"/>
</dbReference>
<dbReference type="PROSITE" id="PS50053">
    <property type="entry name" value="UBIQUITIN_2"/>
    <property type="match status" value="1"/>
</dbReference>
<gene>
    <name type="primary">MUB1</name>
    <name type="synonym">RPS27A1</name>
</gene>
<evidence type="ECO:0000250" key="1"/>
<evidence type="ECO:0000255" key="2">
    <source>
        <dbReference type="PROSITE-ProRule" id="PRU00214"/>
    </source>
</evidence>
<evidence type="ECO:0000305" key="3"/>
<reference key="1">
    <citation type="journal article" date="1990" name="Gene">
        <title>Two ubiquitin-long-tail fusion genes arranged as closely spaced direct repeats in barley.</title>
        <authorList>
            <person name="Gausing K."/>
            <person name="Jensen C.B."/>
        </authorList>
    </citation>
    <scope>NUCLEOTIDE SEQUENCE [GENOMIC DNA]</scope>
    <source>
        <strain>cv. Bomi</strain>
    </source>
</reference>
<organism>
    <name type="scientific">Hordeum vulgare</name>
    <name type="common">Barley</name>
    <dbReference type="NCBI Taxonomy" id="4513"/>
    <lineage>
        <taxon>Eukaryota</taxon>
        <taxon>Viridiplantae</taxon>
        <taxon>Streptophyta</taxon>
        <taxon>Embryophyta</taxon>
        <taxon>Tracheophyta</taxon>
        <taxon>Spermatophyta</taxon>
        <taxon>Magnoliopsida</taxon>
        <taxon>Liliopsida</taxon>
        <taxon>Poales</taxon>
        <taxon>Poaceae</taxon>
        <taxon>BOP clade</taxon>
        <taxon>Pooideae</taxon>
        <taxon>Triticodae</taxon>
        <taxon>Triticeae</taxon>
        <taxon>Hordeinae</taxon>
        <taxon>Hordeum</taxon>
    </lineage>
</organism>
<comment type="function">
    <molecule>Ubiquitin</molecule>
    <text evidence="1">Exists either covalently attached to another protein, or free (unanchored). When covalently bound, it is conjugated to target proteins via an isopeptide bond either as a monomer (monoubiquitin), a polymer linked via different Lys residues of the ubiquitin (polyubiquitin chains) or a linear polymer linked via the initiator Met of the ubiquitin (linear polyubiquitin chains). Polyubiquitin chains, when attached to a target protein, have different functions depending on the Lys residue of the ubiquitin that is linked: Lys-48-linked is involved in protein degradation via the proteasome. Linear polymer chains formed via attachment by the initiator Met lead to cell signaling. Ubiquitin is usually conjugated to Lys residues of target proteins, however, in rare cases, conjugation to Cys or Ser residues has been observed. When polyubiquitin is free (unanchored-polyubiquitin), it also has distinct roles, such as in activation of protein kinases, and in signaling (By similarity).</text>
</comment>
<comment type="function">
    <molecule>Small ribosomal subunit protein eS31z</molecule>
    <text>Component of the 40S subunit of the ribosome.</text>
</comment>
<comment type="subunit">
    <molecule>Small ribosomal subunit protein eS31z</molecule>
    <text evidence="1">Part of the 40S ribosomal subunit.</text>
</comment>
<comment type="subcellular location">
    <molecule>Ubiquitin</molecule>
    <subcellularLocation>
        <location evidence="1">Cytoplasm</location>
    </subcellularLocation>
    <subcellularLocation>
        <location evidence="1">Nucleus</location>
    </subcellularLocation>
</comment>
<comment type="miscellaneous">
    <text>Ubiquitin is generally synthesized as a polyubiquitin precursor with tandem head to tail repeats. Often, there are one to three additional amino acids after the last repeat, removed in the mature protein. Alternatively, ubiquitin extension protein is synthesized as a single copy of ubiquitin fused to a ribosomal protein (either eL40 or eS31) or to an ubiquitin-related protein (either RUB1 or RUB2). Following translation, extension protein is cleaved from ubiquitin.</text>
</comment>
<comment type="similarity">
    <text evidence="3">In the N-terminal section; belongs to the ubiquitin family.</text>
</comment>
<comment type="similarity">
    <text evidence="3">In the C-terminal section; belongs to the eukaryotic ribosomal protein eS31 family.</text>
</comment>
<proteinExistence type="inferred from homology"/>